<keyword id="KW-0472">Membrane</keyword>
<keyword id="KW-1185">Reference proteome</keyword>
<keyword id="KW-0812">Transmembrane</keyword>
<keyword id="KW-1133">Transmembrane helix</keyword>
<keyword id="KW-0813">Transport</keyword>
<proteinExistence type="evidence at transcript level"/>
<organism>
    <name type="scientific">Arabidopsis thaliana</name>
    <name type="common">Mouse-ear cress</name>
    <dbReference type="NCBI Taxonomy" id="3702"/>
    <lineage>
        <taxon>Eukaryota</taxon>
        <taxon>Viridiplantae</taxon>
        <taxon>Streptophyta</taxon>
        <taxon>Embryophyta</taxon>
        <taxon>Tracheophyta</taxon>
        <taxon>Spermatophyta</taxon>
        <taxon>Magnoliopsida</taxon>
        <taxon>eudicotyledons</taxon>
        <taxon>Gunneridae</taxon>
        <taxon>Pentapetalae</taxon>
        <taxon>rosids</taxon>
        <taxon>malvids</taxon>
        <taxon>Brassicales</taxon>
        <taxon>Brassicaceae</taxon>
        <taxon>Camelineae</taxon>
        <taxon>Arabidopsis</taxon>
    </lineage>
</organism>
<evidence type="ECO:0000250" key="1"/>
<evidence type="ECO:0000255" key="2"/>
<evidence type="ECO:0000305" key="3"/>
<dbReference type="EMBL" id="AC006193">
    <property type="protein sequence ID" value="AAD38263.1"/>
    <property type="molecule type" value="Genomic_DNA"/>
</dbReference>
<dbReference type="EMBL" id="CP002684">
    <property type="protein sequence ID" value="AEE34302.1"/>
    <property type="molecule type" value="Genomic_DNA"/>
</dbReference>
<dbReference type="EMBL" id="AK117235">
    <property type="protein sequence ID" value="BAC41911.1"/>
    <property type="molecule type" value="mRNA"/>
</dbReference>
<dbReference type="EMBL" id="AY046018">
    <property type="protein sequence ID" value="AAK76692.1"/>
    <property type="molecule type" value="mRNA"/>
</dbReference>
<dbReference type="EMBL" id="BT002319">
    <property type="protein sequence ID" value="AAN86152.1"/>
    <property type="molecule type" value="mRNA"/>
</dbReference>
<dbReference type="PIR" id="C96672">
    <property type="entry name" value="C96672"/>
</dbReference>
<dbReference type="RefSeq" id="NP_564843.1">
    <property type="nucleotide sequence ID" value="NM_105163.4"/>
</dbReference>
<dbReference type="SMR" id="Q9XIQ7"/>
<dbReference type="FunCoup" id="Q9XIQ7">
    <property type="interactions" value="23"/>
</dbReference>
<dbReference type="STRING" id="3702.Q9XIQ7"/>
<dbReference type="TCDB" id="2.A.71.2.6">
    <property type="family name" value="the folate-biopterin transporter (fbt) family"/>
</dbReference>
<dbReference type="PaxDb" id="3702-AT1G64890.1"/>
<dbReference type="ProteomicsDB" id="222437"/>
<dbReference type="EnsemblPlants" id="AT1G64890.1">
    <property type="protein sequence ID" value="AT1G64890.1"/>
    <property type="gene ID" value="AT1G64890"/>
</dbReference>
<dbReference type="GeneID" id="842797"/>
<dbReference type="Gramene" id="AT1G64890.1">
    <property type="protein sequence ID" value="AT1G64890.1"/>
    <property type="gene ID" value="AT1G64890"/>
</dbReference>
<dbReference type="KEGG" id="ath:AT1G64890"/>
<dbReference type="Araport" id="AT1G64890"/>
<dbReference type="TAIR" id="AT1G64890"/>
<dbReference type="eggNOG" id="ENOG502QSTI">
    <property type="taxonomic scope" value="Eukaryota"/>
</dbReference>
<dbReference type="HOGENOM" id="CLU_018563_0_0_1"/>
<dbReference type="InParanoid" id="Q9XIQ7"/>
<dbReference type="OMA" id="SMYTIVF"/>
<dbReference type="PhylomeDB" id="Q9XIQ7"/>
<dbReference type="PRO" id="PR:Q9XIQ7"/>
<dbReference type="Proteomes" id="UP000006548">
    <property type="component" value="Chromosome 1"/>
</dbReference>
<dbReference type="ExpressionAtlas" id="Q9XIQ7">
    <property type="expression patterns" value="baseline and differential"/>
</dbReference>
<dbReference type="GO" id="GO:0016020">
    <property type="term" value="C:membrane"/>
    <property type="evidence" value="ECO:0007669"/>
    <property type="project" value="UniProtKB-SubCell"/>
</dbReference>
<dbReference type="Gene3D" id="1.20.1250.20">
    <property type="entry name" value="MFS general substrate transporter like domains"/>
    <property type="match status" value="1"/>
</dbReference>
<dbReference type="InterPro" id="IPR039309">
    <property type="entry name" value="BT1"/>
</dbReference>
<dbReference type="InterPro" id="IPR036259">
    <property type="entry name" value="MFS_trans_sf"/>
</dbReference>
<dbReference type="PANTHER" id="PTHR31585">
    <property type="entry name" value="FOLATE-BIOPTERIN TRANSPORTER 1, CHLOROPLASTIC"/>
    <property type="match status" value="1"/>
</dbReference>
<dbReference type="PANTHER" id="PTHR31585:SF2">
    <property type="entry name" value="FOLATE-BIOPTERIN TRANSPORTER 7-RELATED"/>
    <property type="match status" value="1"/>
</dbReference>
<dbReference type="Pfam" id="PF03092">
    <property type="entry name" value="BT1"/>
    <property type="match status" value="1"/>
</dbReference>
<dbReference type="SUPFAM" id="SSF103473">
    <property type="entry name" value="MFS general substrate transporter"/>
    <property type="match status" value="1"/>
</dbReference>
<comment type="function">
    <text evidence="1">Could mediate folate transport.</text>
</comment>
<comment type="subcellular location">
    <subcellularLocation>
        <location evidence="3">Membrane</location>
        <topology evidence="3">Multi-pass membrane protein</topology>
    </subcellularLocation>
</comment>
<comment type="similarity">
    <text evidence="3">Belongs to the major facilitator superfamily. Folate-biopterin transporter (TC 2.A.71) family.</text>
</comment>
<gene>
    <name type="ordered locus">At1g64890</name>
    <name type="ORF">F13O11.19</name>
</gene>
<protein>
    <recommendedName>
        <fullName>Probable folate-biopterin transporter 7</fullName>
    </recommendedName>
</protein>
<name>FBT7_ARATH</name>
<feature type="chain" id="PRO_0000420119" description="Probable folate-biopterin transporter 7">
    <location>
        <begin position="1"/>
        <end position="442"/>
    </location>
</feature>
<feature type="transmembrane region" description="Helical" evidence="2">
    <location>
        <begin position="23"/>
        <end position="43"/>
    </location>
</feature>
<feature type="transmembrane region" description="Helical" evidence="2">
    <location>
        <begin position="64"/>
        <end position="82"/>
    </location>
</feature>
<feature type="transmembrane region" description="Helical" evidence="2">
    <location>
        <begin position="87"/>
        <end position="107"/>
    </location>
</feature>
<feature type="transmembrane region" description="Helical" evidence="2">
    <location>
        <begin position="114"/>
        <end position="134"/>
    </location>
</feature>
<feature type="transmembrane region" description="Helical" evidence="2">
    <location>
        <begin position="158"/>
        <end position="178"/>
    </location>
</feature>
<feature type="transmembrane region" description="Helical" evidence="2">
    <location>
        <begin position="184"/>
        <end position="204"/>
    </location>
</feature>
<feature type="transmembrane region" description="Helical" evidence="2">
    <location>
        <begin position="241"/>
        <end position="261"/>
    </location>
</feature>
<feature type="transmembrane region" description="Helical" evidence="2">
    <location>
        <begin position="270"/>
        <end position="290"/>
    </location>
</feature>
<feature type="transmembrane region" description="Helical" evidence="2">
    <location>
        <begin position="302"/>
        <end position="322"/>
    </location>
</feature>
<feature type="transmembrane region" description="Helical" evidence="2">
    <location>
        <begin position="335"/>
        <end position="355"/>
    </location>
</feature>
<feature type="transmembrane region" description="Helical" evidence="2">
    <location>
        <begin position="379"/>
        <end position="399"/>
    </location>
</feature>
<feature type="transmembrane region" description="Helical" evidence="2">
    <location>
        <begin position="410"/>
        <end position="430"/>
    </location>
</feature>
<feature type="sequence conflict" description="In Ref. 3; BAC41911." evidence="3" ref="3">
    <original>G</original>
    <variation>D</variation>
    <location>
        <position position="24"/>
    </location>
</feature>
<feature type="sequence conflict" description="In Ref. 3; BAC41911." evidence="3" ref="3">
    <original>I</original>
    <variation>V</variation>
    <location>
        <position position="268"/>
    </location>
</feature>
<feature type="sequence conflict" description="In Ref. 4; AAK76692." evidence="3" ref="4">
    <original>V</original>
    <variation>L</variation>
    <location>
        <position position="309"/>
    </location>
</feature>
<accession>Q9XIQ7</accession>
<accession>Q8GZ34</accession>
<accession>Q94AI3</accession>
<sequence>MSSSSDTHAGESRHRRNPIRWLLGFGFFVQGFRGFPWLGANFFLTEQLRVNPSVLQLLQNSANLPMVAKPIYGVVSDSVYFFGQHRIPYIAVGALLQAISWLAIAFLSRSNVSILALSIYLLLSNLGASLVEVANDAIVAESGKQKTSETQSGELPSFVWMVSSLGGILGNLLGGIAIKTFSAQSTFLVFGILALLQFLVTINIREKSLNLPENPSPAGGIRKHLSDLSHVLRKPEISYSIAWIAVSTAVVPVLTGTMFFYQTKFLKIDASLLGISKVFGQIAMLLWGFAYNRWLKAMRPRKLLTAIQVTIAFFVISDLLFVKGVYRDLGVSDSVYVLFFSGFLETLFYFKILPFTVLMARLCPPGCEGSLMAFVMSAIALAFIVSGYLGIVLASFVGVTEDDFSGFTRGLAIEACCVGIPLILTSWIYDEAETKEKSKKIE</sequence>
<reference key="1">
    <citation type="journal article" date="2000" name="Nature">
        <title>Sequence and analysis of chromosome 1 of the plant Arabidopsis thaliana.</title>
        <authorList>
            <person name="Theologis A."/>
            <person name="Ecker J.R."/>
            <person name="Palm C.J."/>
            <person name="Federspiel N.A."/>
            <person name="Kaul S."/>
            <person name="White O."/>
            <person name="Alonso J."/>
            <person name="Altafi H."/>
            <person name="Araujo R."/>
            <person name="Bowman C.L."/>
            <person name="Brooks S.Y."/>
            <person name="Buehler E."/>
            <person name="Chan A."/>
            <person name="Chao Q."/>
            <person name="Chen H."/>
            <person name="Cheuk R.F."/>
            <person name="Chin C.W."/>
            <person name="Chung M.K."/>
            <person name="Conn L."/>
            <person name="Conway A.B."/>
            <person name="Conway A.R."/>
            <person name="Creasy T.H."/>
            <person name="Dewar K."/>
            <person name="Dunn P."/>
            <person name="Etgu P."/>
            <person name="Feldblyum T.V."/>
            <person name="Feng J.-D."/>
            <person name="Fong B."/>
            <person name="Fujii C.Y."/>
            <person name="Gill J.E."/>
            <person name="Goldsmith A.D."/>
            <person name="Haas B."/>
            <person name="Hansen N.F."/>
            <person name="Hughes B."/>
            <person name="Huizar L."/>
            <person name="Hunter J.L."/>
            <person name="Jenkins J."/>
            <person name="Johnson-Hopson C."/>
            <person name="Khan S."/>
            <person name="Khaykin E."/>
            <person name="Kim C.J."/>
            <person name="Koo H.L."/>
            <person name="Kremenetskaia I."/>
            <person name="Kurtz D.B."/>
            <person name="Kwan A."/>
            <person name="Lam B."/>
            <person name="Langin-Hooper S."/>
            <person name="Lee A."/>
            <person name="Lee J.M."/>
            <person name="Lenz C.A."/>
            <person name="Li J.H."/>
            <person name="Li Y.-P."/>
            <person name="Lin X."/>
            <person name="Liu S.X."/>
            <person name="Liu Z.A."/>
            <person name="Luros J.S."/>
            <person name="Maiti R."/>
            <person name="Marziali A."/>
            <person name="Militscher J."/>
            <person name="Miranda M."/>
            <person name="Nguyen M."/>
            <person name="Nierman W.C."/>
            <person name="Osborne B.I."/>
            <person name="Pai G."/>
            <person name="Peterson J."/>
            <person name="Pham P.K."/>
            <person name="Rizzo M."/>
            <person name="Rooney T."/>
            <person name="Rowley D."/>
            <person name="Sakano H."/>
            <person name="Salzberg S.L."/>
            <person name="Schwartz J.R."/>
            <person name="Shinn P."/>
            <person name="Southwick A.M."/>
            <person name="Sun H."/>
            <person name="Tallon L.J."/>
            <person name="Tambunga G."/>
            <person name="Toriumi M.J."/>
            <person name="Town C.D."/>
            <person name="Utterback T."/>
            <person name="Van Aken S."/>
            <person name="Vaysberg M."/>
            <person name="Vysotskaia V.S."/>
            <person name="Walker M."/>
            <person name="Wu D."/>
            <person name="Yu G."/>
            <person name="Fraser C.M."/>
            <person name="Venter J.C."/>
            <person name="Davis R.W."/>
        </authorList>
    </citation>
    <scope>NUCLEOTIDE SEQUENCE [LARGE SCALE GENOMIC DNA]</scope>
    <source>
        <strain>cv. Columbia</strain>
    </source>
</reference>
<reference key="2">
    <citation type="journal article" date="2017" name="Plant J.">
        <title>Araport11: a complete reannotation of the Arabidopsis thaliana reference genome.</title>
        <authorList>
            <person name="Cheng C.Y."/>
            <person name="Krishnakumar V."/>
            <person name="Chan A.P."/>
            <person name="Thibaud-Nissen F."/>
            <person name="Schobel S."/>
            <person name="Town C.D."/>
        </authorList>
    </citation>
    <scope>GENOME REANNOTATION</scope>
    <source>
        <strain>cv. Columbia</strain>
    </source>
</reference>
<reference key="3">
    <citation type="journal article" date="2002" name="Science">
        <title>Functional annotation of a full-length Arabidopsis cDNA collection.</title>
        <authorList>
            <person name="Seki M."/>
            <person name="Narusaka M."/>
            <person name="Kamiya A."/>
            <person name="Ishida J."/>
            <person name="Satou M."/>
            <person name="Sakurai T."/>
            <person name="Nakajima M."/>
            <person name="Enju A."/>
            <person name="Akiyama K."/>
            <person name="Oono Y."/>
            <person name="Muramatsu M."/>
            <person name="Hayashizaki Y."/>
            <person name="Kawai J."/>
            <person name="Carninci P."/>
            <person name="Itoh M."/>
            <person name="Ishii Y."/>
            <person name="Arakawa T."/>
            <person name="Shibata K."/>
            <person name="Shinagawa A."/>
            <person name="Shinozaki K."/>
        </authorList>
    </citation>
    <scope>NUCLEOTIDE SEQUENCE [LARGE SCALE MRNA]</scope>
    <source>
        <strain>cv. Columbia</strain>
    </source>
</reference>
<reference key="4">
    <citation type="journal article" date="2003" name="Science">
        <title>Empirical analysis of transcriptional activity in the Arabidopsis genome.</title>
        <authorList>
            <person name="Yamada K."/>
            <person name="Lim J."/>
            <person name="Dale J.M."/>
            <person name="Chen H."/>
            <person name="Shinn P."/>
            <person name="Palm C.J."/>
            <person name="Southwick A.M."/>
            <person name="Wu H.C."/>
            <person name="Kim C.J."/>
            <person name="Nguyen M."/>
            <person name="Pham P.K."/>
            <person name="Cheuk R.F."/>
            <person name="Karlin-Newmann G."/>
            <person name="Liu S.X."/>
            <person name="Lam B."/>
            <person name="Sakano H."/>
            <person name="Wu T."/>
            <person name="Yu G."/>
            <person name="Miranda M."/>
            <person name="Quach H.L."/>
            <person name="Tripp M."/>
            <person name="Chang C.H."/>
            <person name="Lee J.M."/>
            <person name="Toriumi M.J."/>
            <person name="Chan M.M."/>
            <person name="Tang C.C."/>
            <person name="Onodera C.S."/>
            <person name="Deng J.M."/>
            <person name="Akiyama K."/>
            <person name="Ansari Y."/>
            <person name="Arakawa T."/>
            <person name="Banh J."/>
            <person name="Banno F."/>
            <person name="Bowser L."/>
            <person name="Brooks S.Y."/>
            <person name="Carninci P."/>
            <person name="Chao Q."/>
            <person name="Choy N."/>
            <person name="Enju A."/>
            <person name="Goldsmith A.D."/>
            <person name="Gurjal M."/>
            <person name="Hansen N.F."/>
            <person name="Hayashizaki Y."/>
            <person name="Johnson-Hopson C."/>
            <person name="Hsuan V.W."/>
            <person name="Iida K."/>
            <person name="Karnes M."/>
            <person name="Khan S."/>
            <person name="Koesema E."/>
            <person name="Ishida J."/>
            <person name="Jiang P.X."/>
            <person name="Jones T."/>
            <person name="Kawai J."/>
            <person name="Kamiya A."/>
            <person name="Meyers C."/>
            <person name="Nakajima M."/>
            <person name="Narusaka M."/>
            <person name="Seki M."/>
            <person name="Sakurai T."/>
            <person name="Satou M."/>
            <person name="Tamse R."/>
            <person name="Vaysberg M."/>
            <person name="Wallender E.K."/>
            <person name="Wong C."/>
            <person name="Yamamura Y."/>
            <person name="Yuan S."/>
            <person name="Shinozaki K."/>
            <person name="Davis R.W."/>
            <person name="Theologis A."/>
            <person name="Ecker J.R."/>
        </authorList>
    </citation>
    <scope>NUCLEOTIDE SEQUENCE [LARGE SCALE MRNA]</scope>
    <source>
        <strain>cv. Columbia</strain>
    </source>
</reference>
<reference key="5">
    <citation type="journal article" date="2005" name="J. Biol. Chem.">
        <title>Higher plant plastids and cyanobacteria have folate carriers related to those of trypanosomatids.</title>
        <authorList>
            <person name="Klaus S.M."/>
            <person name="Kunji E.R."/>
            <person name="Bozzo G.G."/>
            <person name="Noiriel A."/>
            <person name="de la Garza R.D."/>
            <person name="Basset G.J."/>
            <person name="Ravanel S."/>
            <person name="Rebeille F."/>
            <person name="Gregory J.F. III"/>
            <person name="Hanson A.D."/>
        </authorList>
    </citation>
    <scope>GENE FAMILY</scope>
</reference>